<keyword id="KW-0067">ATP-binding</keyword>
<keyword id="KW-0460">Magnesium</keyword>
<keyword id="KW-0547">Nucleotide-binding</keyword>
<keyword id="KW-0808">Transferase</keyword>
<keyword id="KW-0819">tRNA processing</keyword>
<gene>
    <name evidence="1" type="primary">miaA</name>
    <name type="ordered locus">PFL_0565</name>
</gene>
<comment type="function">
    <text evidence="1">Catalyzes the transfer of a dimethylallyl group onto the adenine at position 37 in tRNAs that read codons beginning with uridine, leading to the formation of N6-(dimethylallyl)adenosine (i(6)A).</text>
</comment>
<comment type="catalytic activity">
    <reaction evidence="1">
        <text>adenosine(37) in tRNA + dimethylallyl diphosphate = N(6)-dimethylallyladenosine(37) in tRNA + diphosphate</text>
        <dbReference type="Rhea" id="RHEA:26482"/>
        <dbReference type="Rhea" id="RHEA-COMP:10162"/>
        <dbReference type="Rhea" id="RHEA-COMP:10375"/>
        <dbReference type="ChEBI" id="CHEBI:33019"/>
        <dbReference type="ChEBI" id="CHEBI:57623"/>
        <dbReference type="ChEBI" id="CHEBI:74411"/>
        <dbReference type="ChEBI" id="CHEBI:74415"/>
        <dbReference type="EC" id="2.5.1.75"/>
    </reaction>
</comment>
<comment type="cofactor">
    <cofactor evidence="1">
        <name>Mg(2+)</name>
        <dbReference type="ChEBI" id="CHEBI:18420"/>
    </cofactor>
</comment>
<comment type="subunit">
    <text evidence="1">Monomer.</text>
</comment>
<comment type="similarity">
    <text evidence="1">Belongs to the IPP transferase family.</text>
</comment>
<reference key="1">
    <citation type="journal article" date="2005" name="Nat. Biotechnol.">
        <title>Complete genome sequence of the plant commensal Pseudomonas fluorescens Pf-5.</title>
        <authorList>
            <person name="Paulsen I.T."/>
            <person name="Press C.M."/>
            <person name="Ravel J."/>
            <person name="Kobayashi D.Y."/>
            <person name="Myers G.S.A."/>
            <person name="Mavrodi D.V."/>
            <person name="DeBoy R.T."/>
            <person name="Seshadri R."/>
            <person name="Ren Q."/>
            <person name="Madupu R."/>
            <person name="Dodson R.J."/>
            <person name="Durkin A.S."/>
            <person name="Brinkac L.M."/>
            <person name="Daugherty S.C."/>
            <person name="Sullivan S.A."/>
            <person name="Rosovitz M.J."/>
            <person name="Gwinn M.L."/>
            <person name="Zhou L."/>
            <person name="Schneider D.J."/>
            <person name="Cartinhour S.W."/>
            <person name="Nelson W.C."/>
            <person name="Weidman J."/>
            <person name="Watkins K."/>
            <person name="Tran K."/>
            <person name="Khouri H."/>
            <person name="Pierson E.A."/>
            <person name="Pierson L.S. III"/>
            <person name="Thomashow L.S."/>
            <person name="Loper J.E."/>
        </authorList>
    </citation>
    <scope>NUCLEOTIDE SEQUENCE [LARGE SCALE GENOMIC DNA]</scope>
    <source>
        <strain>ATCC BAA-477 / NRRL B-23932 / Pf-5</strain>
    </source>
</reference>
<evidence type="ECO:0000255" key="1">
    <source>
        <dbReference type="HAMAP-Rule" id="MF_00185"/>
    </source>
</evidence>
<organism>
    <name type="scientific">Pseudomonas fluorescens (strain ATCC BAA-477 / NRRL B-23932 / Pf-5)</name>
    <dbReference type="NCBI Taxonomy" id="220664"/>
    <lineage>
        <taxon>Bacteria</taxon>
        <taxon>Pseudomonadati</taxon>
        <taxon>Pseudomonadota</taxon>
        <taxon>Gammaproteobacteria</taxon>
        <taxon>Pseudomonadales</taxon>
        <taxon>Pseudomonadaceae</taxon>
        <taxon>Pseudomonas</taxon>
    </lineage>
</organism>
<dbReference type="EC" id="2.5.1.75" evidence="1"/>
<dbReference type="EMBL" id="CP000076">
    <property type="protein sequence ID" value="AAY95974.1"/>
    <property type="molecule type" value="Genomic_DNA"/>
</dbReference>
<dbReference type="RefSeq" id="WP_011058938.1">
    <property type="nucleotide sequence ID" value="NC_004129.6"/>
</dbReference>
<dbReference type="SMR" id="Q4KJ74"/>
<dbReference type="STRING" id="220664.PFL_0565"/>
<dbReference type="DNASU" id="3481156"/>
<dbReference type="GeneID" id="57473555"/>
<dbReference type="KEGG" id="pfl:PFL_0565"/>
<dbReference type="PATRIC" id="fig|220664.5.peg.583"/>
<dbReference type="eggNOG" id="COG0324">
    <property type="taxonomic scope" value="Bacteria"/>
</dbReference>
<dbReference type="HOGENOM" id="CLU_032616_0_0_6"/>
<dbReference type="Proteomes" id="UP000008540">
    <property type="component" value="Chromosome"/>
</dbReference>
<dbReference type="GO" id="GO:0005524">
    <property type="term" value="F:ATP binding"/>
    <property type="evidence" value="ECO:0007669"/>
    <property type="project" value="UniProtKB-UniRule"/>
</dbReference>
<dbReference type="GO" id="GO:0052381">
    <property type="term" value="F:tRNA dimethylallyltransferase activity"/>
    <property type="evidence" value="ECO:0007669"/>
    <property type="project" value="UniProtKB-UniRule"/>
</dbReference>
<dbReference type="GO" id="GO:0006400">
    <property type="term" value="P:tRNA modification"/>
    <property type="evidence" value="ECO:0007669"/>
    <property type="project" value="TreeGrafter"/>
</dbReference>
<dbReference type="FunFam" id="1.10.20.140:FF:000001">
    <property type="entry name" value="tRNA dimethylallyltransferase"/>
    <property type="match status" value="1"/>
</dbReference>
<dbReference type="Gene3D" id="1.10.20.140">
    <property type="match status" value="1"/>
</dbReference>
<dbReference type="Gene3D" id="3.40.50.300">
    <property type="entry name" value="P-loop containing nucleotide triphosphate hydrolases"/>
    <property type="match status" value="1"/>
</dbReference>
<dbReference type="HAMAP" id="MF_00185">
    <property type="entry name" value="IPP_trans"/>
    <property type="match status" value="1"/>
</dbReference>
<dbReference type="InterPro" id="IPR039657">
    <property type="entry name" value="Dimethylallyltransferase"/>
</dbReference>
<dbReference type="InterPro" id="IPR018022">
    <property type="entry name" value="IPT"/>
</dbReference>
<dbReference type="InterPro" id="IPR027417">
    <property type="entry name" value="P-loop_NTPase"/>
</dbReference>
<dbReference type="NCBIfam" id="TIGR00174">
    <property type="entry name" value="miaA"/>
    <property type="match status" value="1"/>
</dbReference>
<dbReference type="PANTHER" id="PTHR11088">
    <property type="entry name" value="TRNA DIMETHYLALLYLTRANSFERASE"/>
    <property type="match status" value="1"/>
</dbReference>
<dbReference type="PANTHER" id="PTHR11088:SF60">
    <property type="entry name" value="TRNA DIMETHYLALLYLTRANSFERASE"/>
    <property type="match status" value="1"/>
</dbReference>
<dbReference type="Pfam" id="PF01715">
    <property type="entry name" value="IPPT"/>
    <property type="match status" value="1"/>
</dbReference>
<dbReference type="SUPFAM" id="SSF52540">
    <property type="entry name" value="P-loop containing nucleoside triphosphate hydrolases"/>
    <property type="match status" value="2"/>
</dbReference>
<protein>
    <recommendedName>
        <fullName evidence="1">tRNA dimethylallyltransferase</fullName>
        <ecNumber evidence="1">2.5.1.75</ecNumber>
    </recommendedName>
    <alternativeName>
        <fullName evidence="1">Dimethylallyl diphosphate:tRNA dimethylallyltransferase</fullName>
        <shortName evidence="1">DMAPP:tRNA dimethylallyltransferase</shortName>
        <shortName evidence="1">DMATase</shortName>
    </alternativeName>
    <alternativeName>
        <fullName evidence="1">Isopentenyl-diphosphate:tRNA isopentenyltransferase</fullName>
        <shortName evidence="1">IPP transferase</shortName>
        <shortName evidence="1">IPPT</shortName>
        <shortName evidence="1">IPTase</shortName>
    </alternativeName>
</protein>
<name>MIAA_PSEF5</name>
<feature type="chain" id="PRO_1000020643" description="tRNA dimethylallyltransferase">
    <location>
        <begin position="1"/>
        <end position="323"/>
    </location>
</feature>
<feature type="region of interest" description="Interaction with substrate tRNA" evidence="1">
    <location>
        <begin position="37"/>
        <end position="40"/>
    </location>
</feature>
<feature type="region of interest" description="Interaction with substrate tRNA" evidence="1">
    <location>
        <begin position="161"/>
        <end position="165"/>
    </location>
</feature>
<feature type="binding site" evidence="1">
    <location>
        <begin position="12"/>
        <end position="19"/>
    </location>
    <ligand>
        <name>ATP</name>
        <dbReference type="ChEBI" id="CHEBI:30616"/>
    </ligand>
</feature>
<feature type="binding site" evidence="1">
    <location>
        <begin position="14"/>
        <end position="19"/>
    </location>
    <ligand>
        <name>substrate</name>
    </ligand>
</feature>
<feature type="site" description="Interaction with substrate tRNA" evidence="1">
    <location>
        <position position="103"/>
    </location>
</feature>
<feature type="site" description="Interaction with substrate tRNA" evidence="1">
    <location>
        <position position="125"/>
    </location>
</feature>
<sequence length="323" mass="35627">MTQLPPAIFLMGPTAAGKTDLAIELTKVLPCELISVDSALVYRGMDIGTAKPSRELLAQFPHRLIDILDPAESYSAADFRTDALAAMADITARGKIPLLVGGTMLYYKALLEGLADMPAADPQVRAELEEEAARLGWQALHDQLAAVDPESAARIHPNDPQRLTRALEVYRVSGLTMTAHRQRQLAQSTEAGASGRSQLPYTVANLAIAPANRQVLHQRIAQRFTQMLEQGFIDEVVALRSRSDLHAGLPSIRAVGYRQVWDHLDGKLTSAEMQERGIIATRQLAKRQFTWLRSWADLQWLDSLDCDNLPRALKYLGTISILS</sequence>
<accession>Q4KJ74</accession>
<proteinExistence type="inferred from homology"/>